<reference key="1">
    <citation type="journal article" date="2007" name="Mol. Phylogenet. Evol.">
        <title>Phylogenetic and evolutionary implications of complete chloroplast genome sequences of four early-diverging angiosperms: Buxus (Buxaceae), Chloranthus (Chloranthaceae), Dioscorea (Dioscoreaceae), and Illicium (Schisandraceae).</title>
        <authorList>
            <person name="Hansen D.R."/>
            <person name="Dastidar S.G."/>
            <person name="Cai Z."/>
            <person name="Penaflor C."/>
            <person name="Kuehl J.V."/>
            <person name="Boore J.L."/>
            <person name="Jansen R.K."/>
        </authorList>
    </citation>
    <scope>NUCLEOTIDE SEQUENCE [LARGE SCALE GENOMIC DNA]</scope>
</reference>
<name>MATK_DIOEL</name>
<keyword id="KW-0150">Chloroplast</keyword>
<keyword id="KW-0507">mRNA processing</keyword>
<keyword id="KW-0934">Plastid</keyword>
<keyword id="KW-0694">RNA-binding</keyword>
<keyword id="KW-0819">tRNA processing</keyword>
<feature type="chain" id="PRO_0000355931" description="Maturase K">
    <location>
        <begin position="1"/>
        <end position="519"/>
    </location>
</feature>
<proteinExistence type="inferred from homology"/>
<gene>
    <name evidence="1" type="primary">matK</name>
</gene>
<sequence>MKIEELQGYLEKDGSRQRHFLFLYPLLFQEYIYTLAHDHGLNGSIFVEILDYDNKSSSVLVKHLITRMYQQNYLIYSADDSNQNRIVGHNNFFYSKMISEGFAVSMEIPFLLRLGSSLEEKEIPKSQNLRSIHSIFPFLEDKSSHLNYVSDILIPHPIHLEILVQILQCWTQDVSSLHLLRFFLHEYHNSNSFITPKKPVYVISISKENKRFFRFLYNSYVFECEFLLVFFHKQSSYLRSRSSGVFLERTHFYEKMGNFLVVCCNYFQKTQWFFKDPFLHYVRYQGKAILVSKGTHLLMRKWRSYLVHFWQYYFQFWSHPHRIHINQLSNYSFCFLGYLSNLLINLSVVRSQMLENSFVIDILTKKFDTRVSVIALIRSLSKAKFCTVSGHPISKSIWTNLSDLDIIHRFGWICRNLSHYHSGSSKKQSLYRIKYILRISCARTLARKHKSKVRAFLQRLGSGLLQEFFREEEEILSLIFPQALFRSHTGRIWYLDIICINDLRNLMIDHKIKPYNECK</sequence>
<evidence type="ECO:0000255" key="1">
    <source>
        <dbReference type="HAMAP-Rule" id="MF_01390"/>
    </source>
</evidence>
<dbReference type="EMBL" id="EF380353">
    <property type="protein sequence ID" value="ABR01412.1"/>
    <property type="molecule type" value="Genomic_DNA"/>
</dbReference>
<dbReference type="RefSeq" id="YP_001294334.1">
    <property type="nucleotide sequence ID" value="NC_009601.1"/>
</dbReference>
<dbReference type="GeneID" id="5236585"/>
<dbReference type="GO" id="GO:0009507">
    <property type="term" value="C:chloroplast"/>
    <property type="evidence" value="ECO:0007669"/>
    <property type="project" value="UniProtKB-SubCell"/>
</dbReference>
<dbReference type="GO" id="GO:0003723">
    <property type="term" value="F:RNA binding"/>
    <property type="evidence" value="ECO:0007669"/>
    <property type="project" value="UniProtKB-KW"/>
</dbReference>
<dbReference type="GO" id="GO:0006397">
    <property type="term" value="P:mRNA processing"/>
    <property type="evidence" value="ECO:0007669"/>
    <property type="project" value="UniProtKB-KW"/>
</dbReference>
<dbReference type="GO" id="GO:0008380">
    <property type="term" value="P:RNA splicing"/>
    <property type="evidence" value="ECO:0007669"/>
    <property type="project" value="UniProtKB-UniRule"/>
</dbReference>
<dbReference type="GO" id="GO:0008033">
    <property type="term" value="P:tRNA processing"/>
    <property type="evidence" value="ECO:0007669"/>
    <property type="project" value="UniProtKB-KW"/>
</dbReference>
<dbReference type="HAMAP" id="MF_01390">
    <property type="entry name" value="MatK"/>
    <property type="match status" value="1"/>
</dbReference>
<dbReference type="InterPro" id="IPR024937">
    <property type="entry name" value="Domain_X"/>
</dbReference>
<dbReference type="InterPro" id="IPR002866">
    <property type="entry name" value="Maturase_MatK"/>
</dbReference>
<dbReference type="InterPro" id="IPR024942">
    <property type="entry name" value="Maturase_MatK_N"/>
</dbReference>
<dbReference type="PANTHER" id="PTHR34811">
    <property type="entry name" value="MATURASE K"/>
    <property type="match status" value="1"/>
</dbReference>
<dbReference type="PANTHER" id="PTHR34811:SF1">
    <property type="entry name" value="MATURASE K"/>
    <property type="match status" value="1"/>
</dbReference>
<dbReference type="Pfam" id="PF01348">
    <property type="entry name" value="Intron_maturas2"/>
    <property type="match status" value="1"/>
</dbReference>
<dbReference type="Pfam" id="PF01824">
    <property type="entry name" value="MatK_N"/>
    <property type="match status" value="1"/>
</dbReference>
<protein>
    <recommendedName>
        <fullName evidence="1">Maturase K</fullName>
    </recommendedName>
    <alternativeName>
        <fullName evidence="1">Intron maturase</fullName>
    </alternativeName>
</protein>
<comment type="function">
    <text evidence="1">Usually encoded in the trnK tRNA gene intron. Probably assists in splicing its own and other chloroplast group II introns.</text>
</comment>
<comment type="subcellular location">
    <subcellularLocation>
        <location>Plastid</location>
        <location>Chloroplast</location>
    </subcellularLocation>
</comment>
<comment type="similarity">
    <text evidence="1">Belongs to the intron maturase 2 family. MatK subfamily.</text>
</comment>
<organism>
    <name type="scientific">Dioscorea elephantipes</name>
    <name type="common">Elephant's foot yam</name>
    <name type="synonym">Testudinaria elephantipes</name>
    <dbReference type="NCBI Taxonomy" id="145284"/>
    <lineage>
        <taxon>Eukaryota</taxon>
        <taxon>Viridiplantae</taxon>
        <taxon>Streptophyta</taxon>
        <taxon>Embryophyta</taxon>
        <taxon>Tracheophyta</taxon>
        <taxon>Spermatophyta</taxon>
        <taxon>Magnoliopsida</taxon>
        <taxon>Liliopsida</taxon>
        <taxon>Dioscoreales</taxon>
        <taxon>Dioscoreaceae</taxon>
        <taxon>Dioscorea</taxon>
    </lineage>
</organism>
<geneLocation type="chloroplast"/>
<accession>A6MMI9</accession>